<reference key="1">
    <citation type="journal article" date="2007" name="J. Bacteriol.">
        <title>Complete genome of acute rheumatic fever-associated serotype M5 Streptococcus pyogenes strain Manfredo.</title>
        <authorList>
            <person name="Holden M.T.G."/>
            <person name="Scott A."/>
            <person name="Cherevach I."/>
            <person name="Chillingworth T."/>
            <person name="Churcher C."/>
            <person name="Cronin A."/>
            <person name="Dowd L."/>
            <person name="Feltwell T."/>
            <person name="Hamlin N."/>
            <person name="Holroyd S."/>
            <person name="Jagels K."/>
            <person name="Moule S."/>
            <person name="Mungall K."/>
            <person name="Quail M.A."/>
            <person name="Price C."/>
            <person name="Rabbinowitsch E."/>
            <person name="Sharp S."/>
            <person name="Skelton J."/>
            <person name="Whitehead S."/>
            <person name="Barrell B.G."/>
            <person name="Kehoe M."/>
            <person name="Parkhill J."/>
        </authorList>
    </citation>
    <scope>NUCLEOTIDE SEQUENCE [LARGE SCALE GENOMIC DNA]</scope>
    <source>
        <strain>Manfredo</strain>
    </source>
</reference>
<sequence>MTQVFQGRSFLAEKDFTRAELEYLIDFSAHLKDLKKRGVPHHYLEGKNIALLFEKTSTRTRAAFTTAAIDLGAHPEYLGANDIQLGKKESTEDTAKVLGRMFDGIEFRGFSQRMVEELAEFSGVPVWNGLTDEWHPTQMLADYLTVKENFGKLEGLTLVYCGDGRNNVANSLLVTGAILGVNVHIFSPKELFPEEEIVTLAEGYAKESGARILITEDADEAVKGADVLYTDVWVSMGEEDKFKERVELLQPYQVNMDLVQKAGNDKLIFLHCLPAFHDTNTVYGKDVAEKFGVKEMEVTDEVFRSKYARHFDQAENRMHTIKAVMAATLGNLFIPKV</sequence>
<comment type="function">
    <text evidence="1">Reversibly catalyzes the transfer of the carbamoyl group from carbamoyl phosphate (CP) to the N(epsilon) atom of ornithine (ORN) to produce L-citrulline.</text>
</comment>
<comment type="catalytic activity">
    <reaction evidence="2">
        <text>carbamoyl phosphate + L-ornithine = L-citrulline + phosphate + H(+)</text>
        <dbReference type="Rhea" id="RHEA:19513"/>
        <dbReference type="ChEBI" id="CHEBI:15378"/>
        <dbReference type="ChEBI" id="CHEBI:43474"/>
        <dbReference type="ChEBI" id="CHEBI:46911"/>
        <dbReference type="ChEBI" id="CHEBI:57743"/>
        <dbReference type="ChEBI" id="CHEBI:58228"/>
        <dbReference type="EC" id="2.1.3.3"/>
    </reaction>
</comment>
<comment type="pathway">
    <text evidence="2">Amino-acid degradation; L-arginine degradation via ADI pathway; carbamoyl phosphate from L-arginine: step 2/2.</text>
</comment>
<comment type="subcellular location">
    <subcellularLocation>
        <location evidence="2">Cytoplasm</location>
    </subcellularLocation>
</comment>
<comment type="similarity">
    <text evidence="2">Belongs to the aspartate/ornithine carbamoyltransferase superfamily. OTCase family.</text>
</comment>
<keyword id="KW-0056">Arginine metabolism</keyword>
<keyword id="KW-0963">Cytoplasm</keyword>
<keyword id="KW-0808">Transferase</keyword>
<name>OTC_STRPG</name>
<feature type="chain" id="PRO_1000065127" description="Ornithine carbamoyltransferase">
    <location>
        <begin position="1"/>
        <end position="337"/>
    </location>
</feature>
<feature type="binding site" evidence="2">
    <location>
        <begin position="57"/>
        <end position="60"/>
    </location>
    <ligand>
        <name>carbamoyl phosphate</name>
        <dbReference type="ChEBI" id="CHEBI:58228"/>
    </ligand>
</feature>
<feature type="binding site" evidence="2">
    <location>
        <position position="84"/>
    </location>
    <ligand>
        <name>carbamoyl phosphate</name>
        <dbReference type="ChEBI" id="CHEBI:58228"/>
    </ligand>
</feature>
<feature type="binding site" evidence="2">
    <location>
        <position position="108"/>
    </location>
    <ligand>
        <name>carbamoyl phosphate</name>
        <dbReference type="ChEBI" id="CHEBI:58228"/>
    </ligand>
</feature>
<feature type="binding site" evidence="2">
    <location>
        <begin position="135"/>
        <end position="138"/>
    </location>
    <ligand>
        <name>carbamoyl phosphate</name>
        <dbReference type="ChEBI" id="CHEBI:58228"/>
    </ligand>
</feature>
<feature type="binding site" evidence="2">
    <location>
        <position position="167"/>
    </location>
    <ligand>
        <name>L-ornithine</name>
        <dbReference type="ChEBI" id="CHEBI:46911"/>
    </ligand>
</feature>
<feature type="binding site" evidence="2">
    <location>
        <position position="231"/>
    </location>
    <ligand>
        <name>L-ornithine</name>
        <dbReference type="ChEBI" id="CHEBI:46911"/>
    </ligand>
</feature>
<feature type="binding site" evidence="2">
    <location>
        <begin position="235"/>
        <end position="236"/>
    </location>
    <ligand>
        <name>L-ornithine</name>
        <dbReference type="ChEBI" id="CHEBI:46911"/>
    </ligand>
</feature>
<feature type="binding site" evidence="2">
    <location>
        <begin position="272"/>
        <end position="273"/>
    </location>
    <ligand>
        <name>carbamoyl phosphate</name>
        <dbReference type="ChEBI" id="CHEBI:58228"/>
    </ligand>
</feature>
<feature type="binding site" evidence="2">
    <location>
        <position position="317"/>
    </location>
    <ligand>
        <name>carbamoyl phosphate</name>
        <dbReference type="ChEBI" id="CHEBI:58228"/>
    </ligand>
</feature>
<proteinExistence type="inferred from homology"/>
<organism>
    <name type="scientific">Streptococcus pyogenes serotype M5 (strain Manfredo)</name>
    <dbReference type="NCBI Taxonomy" id="160491"/>
    <lineage>
        <taxon>Bacteria</taxon>
        <taxon>Bacillati</taxon>
        <taxon>Bacillota</taxon>
        <taxon>Bacilli</taxon>
        <taxon>Lactobacillales</taxon>
        <taxon>Streptococcaceae</taxon>
        <taxon>Streptococcus</taxon>
    </lineage>
</organism>
<evidence type="ECO:0000250" key="1"/>
<evidence type="ECO:0000255" key="2">
    <source>
        <dbReference type="HAMAP-Rule" id="MF_01109"/>
    </source>
</evidence>
<gene>
    <name evidence="2" type="primary">arcB</name>
    <name type="ordered locus">SpyM50579</name>
</gene>
<dbReference type="EC" id="2.1.3.3" evidence="2"/>
<dbReference type="EMBL" id="AM295007">
    <property type="protein sequence ID" value="CAM29916.1"/>
    <property type="molecule type" value="Genomic_DNA"/>
</dbReference>
<dbReference type="SMR" id="A2RDJ1"/>
<dbReference type="KEGG" id="spf:SpyM50579"/>
<dbReference type="HOGENOM" id="CLU_043846_3_1_9"/>
<dbReference type="UniPathway" id="UPA00254">
    <property type="reaction ID" value="UER00365"/>
</dbReference>
<dbReference type="GO" id="GO:0005737">
    <property type="term" value="C:cytoplasm"/>
    <property type="evidence" value="ECO:0007669"/>
    <property type="project" value="UniProtKB-SubCell"/>
</dbReference>
<dbReference type="GO" id="GO:0016597">
    <property type="term" value="F:amino acid binding"/>
    <property type="evidence" value="ECO:0007669"/>
    <property type="project" value="InterPro"/>
</dbReference>
<dbReference type="GO" id="GO:0004585">
    <property type="term" value="F:ornithine carbamoyltransferase activity"/>
    <property type="evidence" value="ECO:0007669"/>
    <property type="project" value="UniProtKB-UniRule"/>
</dbReference>
<dbReference type="GO" id="GO:0042450">
    <property type="term" value="P:arginine biosynthetic process via ornithine"/>
    <property type="evidence" value="ECO:0007669"/>
    <property type="project" value="TreeGrafter"/>
</dbReference>
<dbReference type="GO" id="GO:0019547">
    <property type="term" value="P:arginine catabolic process to ornithine"/>
    <property type="evidence" value="ECO:0007669"/>
    <property type="project" value="UniProtKB-UniRule"/>
</dbReference>
<dbReference type="GO" id="GO:0019240">
    <property type="term" value="P:citrulline biosynthetic process"/>
    <property type="evidence" value="ECO:0007669"/>
    <property type="project" value="TreeGrafter"/>
</dbReference>
<dbReference type="FunFam" id="3.40.50.1370:FF:000004">
    <property type="entry name" value="Ornithine carbamoyltransferase"/>
    <property type="match status" value="1"/>
</dbReference>
<dbReference type="Gene3D" id="3.40.50.1370">
    <property type="entry name" value="Aspartate/ornithine carbamoyltransferase"/>
    <property type="match status" value="2"/>
</dbReference>
<dbReference type="HAMAP" id="MF_01109">
    <property type="entry name" value="OTCase"/>
    <property type="match status" value="1"/>
</dbReference>
<dbReference type="InterPro" id="IPR006132">
    <property type="entry name" value="Asp/Orn_carbamoyltranf_P-bd"/>
</dbReference>
<dbReference type="InterPro" id="IPR006130">
    <property type="entry name" value="Asp/Orn_carbamoylTrfase"/>
</dbReference>
<dbReference type="InterPro" id="IPR036901">
    <property type="entry name" value="Asp/Orn_carbamoylTrfase_sf"/>
</dbReference>
<dbReference type="InterPro" id="IPR006131">
    <property type="entry name" value="Asp_carbamoyltransf_Asp/Orn-bd"/>
</dbReference>
<dbReference type="InterPro" id="IPR002292">
    <property type="entry name" value="Orn/put_carbamltrans"/>
</dbReference>
<dbReference type="InterPro" id="IPR024904">
    <property type="entry name" value="OTCase_ArgI"/>
</dbReference>
<dbReference type="NCBIfam" id="TIGR00658">
    <property type="entry name" value="orni_carb_tr"/>
    <property type="match status" value="1"/>
</dbReference>
<dbReference type="NCBIfam" id="NF001986">
    <property type="entry name" value="PRK00779.1"/>
    <property type="match status" value="1"/>
</dbReference>
<dbReference type="PANTHER" id="PTHR45753:SF1">
    <property type="entry name" value="ORNITHINE CARBAMOYLTRANSFERASE, CATABOLIC"/>
    <property type="match status" value="1"/>
</dbReference>
<dbReference type="PANTHER" id="PTHR45753">
    <property type="entry name" value="ORNITHINE CARBAMOYLTRANSFERASE, MITOCHONDRIAL"/>
    <property type="match status" value="1"/>
</dbReference>
<dbReference type="Pfam" id="PF00185">
    <property type="entry name" value="OTCace"/>
    <property type="match status" value="1"/>
</dbReference>
<dbReference type="Pfam" id="PF02729">
    <property type="entry name" value="OTCace_N"/>
    <property type="match status" value="1"/>
</dbReference>
<dbReference type="PRINTS" id="PR00100">
    <property type="entry name" value="AOTCASE"/>
</dbReference>
<dbReference type="PRINTS" id="PR00102">
    <property type="entry name" value="OTCASE"/>
</dbReference>
<dbReference type="SUPFAM" id="SSF53671">
    <property type="entry name" value="Aspartate/ornithine carbamoyltransferase"/>
    <property type="match status" value="1"/>
</dbReference>
<dbReference type="PROSITE" id="PS00097">
    <property type="entry name" value="CARBAMOYLTRANSFERASE"/>
    <property type="match status" value="1"/>
</dbReference>
<protein>
    <recommendedName>
        <fullName evidence="2">Ornithine carbamoyltransferase</fullName>
        <shortName evidence="2">OTCase</shortName>
        <ecNumber evidence="2">2.1.3.3</ecNumber>
    </recommendedName>
</protein>
<accession>A2RDJ1</accession>